<dbReference type="EC" id="2.7.7.18" evidence="1"/>
<dbReference type="EMBL" id="CP000805">
    <property type="protein sequence ID" value="ACD71159.1"/>
    <property type="molecule type" value="Genomic_DNA"/>
</dbReference>
<dbReference type="RefSeq" id="WP_010882186.1">
    <property type="nucleotide sequence ID" value="NC_021508.1"/>
</dbReference>
<dbReference type="SMR" id="B2S3Y0"/>
<dbReference type="GeneID" id="93876509"/>
<dbReference type="KEGG" id="tpp:TPASS_0741"/>
<dbReference type="PATRIC" id="fig|455434.6.peg.731"/>
<dbReference type="UniPathway" id="UPA00253">
    <property type="reaction ID" value="UER00332"/>
</dbReference>
<dbReference type="Proteomes" id="UP000001202">
    <property type="component" value="Chromosome"/>
</dbReference>
<dbReference type="GO" id="GO:0005524">
    <property type="term" value="F:ATP binding"/>
    <property type="evidence" value="ECO:0007669"/>
    <property type="project" value="UniProtKB-KW"/>
</dbReference>
<dbReference type="GO" id="GO:0004515">
    <property type="term" value="F:nicotinate-nucleotide adenylyltransferase activity"/>
    <property type="evidence" value="ECO:0007669"/>
    <property type="project" value="UniProtKB-UniRule"/>
</dbReference>
<dbReference type="GO" id="GO:0009435">
    <property type="term" value="P:NAD biosynthetic process"/>
    <property type="evidence" value="ECO:0007669"/>
    <property type="project" value="UniProtKB-UniRule"/>
</dbReference>
<dbReference type="CDD" id="cd02165">
    <property type="entry name" value="NMNAT"/>
    <property type="match status" value="1"/>
</dbReference>
<dbReference type="Gene3D" id="3.40.50.620">
    <property type="entry name" value="HUPs"/>
    <property type="match status" value="1"/>
</dbReference>
<dbReference type="HAMAP" id="MF_00244">
    <property type="entry name" value="NaMN_adenylyltr"/>
    <property type="match status" value="1"/>
</dbReference>
<dbReference type="InterPro" id="IPR004821">
    <property type="entry name" value="Cyt_trans-like"/>
</dbReference>
<dbReference type="InterPro" id="IPR005248">
    <property type="entry name" value="NadD/NMNAT"/>
</dbReference>
<dbReference type="InterPro" id="IPR014729">
    <property type="entry name" value="Rossmann-like_a/b/a_fold"/>
</dbReference>
<dbReference type="NCBIfam" id="TIGR00125">
    <property type="entry name" value="cyt_tran_rel"/>
    <property type="match status" value="1"/>
</dbReference>
<dbReference type="NCBIfam" id="TIGR00482">
    <property type="entry name" value="nicotinate (nicotinamide) nucleotide adenylyltransferase"/>
    <property type="match status" value="1"/>
</dbReference>
<dbReference type="PANTHER" id="PTHR39321">
    <property type="entry name" value="NICOTINATE-NUCLEOTIDE ADENYLYLTRANSFERASE-RELATED"/>
    <property type="match status" value="1"/>
</dbReference>
<dbReference type="PANTHER" id="PTHR39321:SF3">
    <property type="entry name" value="PHOSPHOPANTETHEINE ADENYLYLTRANSFERASE"/>
    <property type="match status" value="1"/>
</dbReference>
<dbReference type="Pfam" id="PF01467">
    <property type="entry name" value="CTP_transf_like"/>
    <property type="match status" value="1"/>
</dbReference>
<dbReference type="SUPFAM" id="SSF52374">
    <property type="entry name" value="Nucleotidylyl transferase"/>
    <property type="match status" value="1"/>
</dbReference>
<evidence type="ECO:0000255" key="1">
    <source>
        <dbReference type="HAMAP-Rule" id="MF_00244"/>
    </source>
</evidence>
<accession>B2S3Y0</accession>
<organism>
    <name type="scientific">Treponema pallidum subsp. pallidum (strain SS14)</name>
    <dbReference type="NCBI Taxonomy" id="455434"/>
    <lineage>
        <taxon>Bacteria</taxon>
        <taxon>Pseudomonadati</taxon>
        <taxon>Spirochaetota</taxon>
        <taxon>Spirochaetia</taxon>
        <taxon>Spirochaetales</taxon>
        <taxon>Treponemataceae</taxon>
        <taxon>Treponema</taxon>
    </lineage>
</organism>
<reference key="1">
    <citation type="journal article" date="2008" name="BMC Microbiol.">
        <title>Complete genome sequence of Treponema pallidum ssp. pallidum strain SS14 determined with oligonucleotide arrays.</title>
        <authorList>
            <person name="Matejkova P."/>
            <person name="Strouhal M."/>
            <person name="Smajs D."/>
            <person name="Norris S.J."/>
            <person name="Palzkill T."/>
            <person name="Petrosino J.F."/>
            <person name="Sodergren E."/>
            <person name="Norton J.E."/>
            <person name="Singh J."/>
            <person name="Richmond T.A."/>
            <person name="Molla M.N."/>
            <person name="Albert T.J."/>
            <person name="Weinstock G.M."/>
        </authorList>
    </citation>
    <scope>NUCLEOTIDE SEQUENCE [LARGE SCALE GENOMIC DNA]</scope>
    <source>
        <strain>SS14</strain>
    </source>
</reference>
<protein>
    <recommendedName>
        <fullName evidence="1">Probable nicotinate-nucleotide adenylyltransferase</fullName>
        <ecNumber evidence="1">2.7.7.18</ecNumber>
    </recommendedName>
    <alternativeName>
        <fullName evidence="1">Deamido-NAD(+) diphosphorylase</fullName>
    </alternativeName>
    <alternativeName>
        <fullName evidence="1">Deamido-NAD(+) pyrophosphorylase</fullName>
    </alternativeName>
    <alternativeName>
        <fullName evidence="1">Nicotinate mononucleotide adenylyltransferase</fullName>
        <shortName evidence="1">NaMN adenylyltransferase</shortName>
    </alternativeName>
</protein>
<proteinExistence type="inferred from homology"/>
<gene>
    <name evidence="1" type="primary">nadD</name>
    <name type="ordered locus">TPASS_0741</name>
</gene>
<keyword id="KW-0067">ATP-binding</keyword>
<keyword id="KW-0520">NAD</keyword>
<keyword id="KW-0547">Nucleotide-binding</keyword>
<keyword id="KW-0548">Nucleotidyltransferase</keyword>
<keyword id="KW-0662">Pyridine nucleotide biosynthesis</keyword>
<keyword id="KW-0808">Transferase</keyword>
<comment type="function">
    <text evidence="1">Catalyzes the reversible adenylation of nicotinate mononucleotide (NaMN) to nicotinic acid adenine dinucleotide (NaAD).</text>
</comment>
<comment type="catalytic activity">
    <reaction evidence="1">
        <text>nicotinate beta-D-ribonucleotide + ATP + H(+) = deamido-NAD(+) + diphosphate</text>
        <dbReference type="Rhea" id="RHEA:22860"/>
        <dbReference type="ChEBI" id="CHEBI:15378"/>
        <dbReference type="ChEBI" id="CHEBI:30616"/>
        <dbReference type="ChEBI" id="CHEBI:33019"/>
        <dbReference type="ChEBI" id="CHEBI:57502"/>
        <dbReference type="ChEBI" id="CHEBI:58437"/>
        <dbReference type="EC" id="2.7.7.18"/>
    </reaction>
</comment>
<comment type="pathway">
    <text evidence="1">Cofactor biosynthesis; NAD(+) biosynthesis; deamido-NAD(+) from nicotinate D-ribonucleotide: step 1/1.</text>
</comment>
<comment type="similarity">
    <text evidence="1">Belongs to the NadD family.</text>
</comment>
<sequence>MKLALFGGSYDPVHLGHLLLADAVHRHAGYDRVLFVPTFVSPFKEKEGSASAHDRVRMLHLAIGTTPYFSVEECEIRRGGISYTAETVQHVREKYGAQLEGKLALVLGEDAARSVPHWHAFDSWSTHVDFVVGARPVTSGDGGNVERATRTLQSFPFPWVSAENVALPISSTYIRTAIQRGRSWGYLVPSPVREYIIARGLYRS</sequence>
<name>NADD_TREPS</name>
<feature type="chain" id="PRO_1000100801" description="Probable nicotinate-nucleotide adenylyltransferase">
    <location>
        <begin position="1"/>
        <end position="204"/>
    </location>
</feature>